<name>IXTPA_XANOR</name>
<sequence>MKHLVLASGNAGKLEELRAMLAGLPLRIVAQGELGVDDVPETGLTFVENALIKARHASAVTGLPALADDSGLIVDALDGAPGLYSARYAGSPTNALANNAKLLDAMRGVPAERRSARFYAVIVLLRHPEDPQPLIAEGSWEGTITTEPRGDGGFGYNPVFLDPVYGLTAAEMDSALKNRLSHRAVALATLQHKLHALSL</sequence>
<comment type="function">
    <text evidence="1">Pyrophosphatase that catalyzes the hydrolysis of nucleoside triphosphates to their monophosphate derivatives, with a high preference for the non-canonical purine nucleotides XTP (xanthosine triphosphate), dITP (deoxyinosine triphosphate) and ITP. Seems to function as a house-cleaning enzyme that removes non-canonical purine nucleotides from the nucleotide pool, thus preventing their incorporation into DNA/RNA and avoiding chromosomal lesions.</text>
</comment>
<comment type="catalytic activity">
    <reaction evidence="1">
        <text>XTP + H2O = XMP + diphosphate + H(+)</text>
        <dbReference type="Rhea" id="RHEA:28610"/>
        <dbReference type="ChEBI" id="CHEBI:15377"/>
        <dbReference type="ChEBI" id="CHEBI:15378"/>
        <dbReference type="ChEBI" id="CHEBI:33019"/>
        <dbReference type="ChEBI" id="CHEBI:57464"/>
        <dbReference type="ChEBI" id="CHEBI:61314"/>
        <dbReference type="EC" id="3.6.1.66"/>
    </reaction>
</comment>
<comment type="catalytic activity">
    <reaction evidence="1">
        <text>dITP + H2O = dIMP + diphosphate + H(+)</text>
        <dbReference type="Rhea" id="RHEA:28342"/>
        <dbReference type="ChEBI" id="CHEBI:15377"/>
        <dbReference type="ChEBI" id="CHEBI:15378"/>
        <dbReference type="ChEBI" id="CHEBI:33019"/>
        <dbReference type="ChEBI" id="CHEBI:61194"/>
        <dbReference type="ChEBI" id="CHEBI:61382"/>
        <dbReference type="EC" id="3.6.1.66"/>
    </reaction>
</comment>
<comment type="catalytic activity">
    <reaction evidence="1">
        <text>ITP + H2O = IMP + diphosphate + H(+)</text>
        <dbReference type="Rhea" id="RHEA:29399"/>
        <dbReference type="ChEBI" id="CHEBI:15377"/>
        <dbReference type="ChEBI" id="CHEBI:15378"/>
        <dbReference type="ChEBI" id="CHEBI:33019"/>
        <dbReference type="ChEBI" id="CHEBI:58053"/>
        <dbReference type="ChEBI" id="CHEBI:61402"/>
        <dbReference type="EC" id="3.6.1.66"/>
    </reaction>
</comment>
<comment type="cofactor">
    <cofactor evidence="1">
        <name>Mg(2+)</name>
        <dbReference type="ChEBI" id="CHEBI:18420"/>
    </cofactor>
    <text evidence="1">Binds 1 Mg(2+) ion per subunit.</text>
</comment>
<comment type="subunit">
    <text evidence="1">Homodimer.</text>
</comment>
<comment type="similarity">
    <text evidence="1">Belongs to the HAM1 NTPase family.</text>
</comment>
<feature type="chain" id="PRO_0000178268" description="dITP/XTP pyrophosphatase">
    <location>
        <begin position="1"/>
        <end position="199"/>
    </location>
</feature>
<feature type="active site" description="Proton acceptor" evidence="1">
    <location>
        <position position="69"/>
    </location>
</feature>
<feature type="binding site" evidence="1">
    <location>
        <begin position="8"/>
        <end position="13"/>
    </location>
    <ligand>
        <name>substrate</name>
    </ligand>
</feature>
<feature type="binding site" evidence="1">
    <location>
        <position position="69"/>
    </location>
    <ligand>
        <name>Mg(2+)</name>
        <dbReference type="ChEBI" id="CHEBI:18420"/>
    </ligand>
</feature>
<feature type="binding site" evidence="1">
    <location>
        <position position="70"/>
    </location>
    <ligand>
        <name>substrate</name>
    </ligand>
</feature>
<feature type="binding site" evidence="1">
    <location>
        <begin position="154"/>
        <end position="157"/>
    </location>
    <ligand>
        <name>substrate</name>
    </ligand>
</feature>
<feature type="binding site" evidence="1">
    <location>
        <position position="177"/>
    </location>
    <ligand>
        <name>substrate</name>
    </ligand>
</feature>
<feature type="binding site" evidence="1">
    <location>
        <begin position="182"/>
        <end position="183"/>
    </location>
    <ligand>
        <name>substrate</name>
    </ligand>
</feature>
<protein>
    <recommendedName>
        <fullName evidence="1">dITP/XTP pyrophosphatase</fullName>
        <ecNumber evidence="1">3.6.1.66</ecNumber>
    </recommendedName>
    <alternativeName>
        <fullName evidence="1">Non-canonical purine NTP pyrophosphatase</fullName>
    </alternativeName>
    <alternativeName>
        <fullName evidence="1">Non-standard purine NTP pyrophosphatase</fullName>
    </alternativeName>
    <alternativeName>
        <fullName evidence="1">Nucleoside-triphosphate diphosphatase</fullName>
    </alternativeName>
    <alternativeName>
        <fullName evidence="1">Nucleoside-triphosphate pyrophosphatase</fullName>
        <shortName evidence="1">NTPase</shortName>
    </alternativeName>
</protein>
<gene>
    <name type="ordered locus">XOO1141</name>
</gene>
<evidence type="ECO:0000255" key="1">
    <source>
        <dbReference type="HAMAP-Rule" id="MF_01405"/>
    </source>
</evidence>
<proteinExistence type="inferred from homology"/>
<dbReference type="EC" id="3.6.1.66" evidence="1"/>
<dbReference type="EMBL" id="AE013598">
    <property type="protein sequence ID" value="AAW74395.1"/>
    <property type="molecule type" value="Genomic_DNA"/>
</dbReference>
<dbReference type="SMR" id="Q5H3S6"/>
<dbReference type="STRING" id="291331.XOO1141"/>
<dbReference type="KEGG" id="xoo:XOO1141"/>
<dbReference type="HOGENOM" id="CLU_082080_0_3_6"/>
<dbReference type="Proteomes" id="UP000006735">
    <property type="component" value="Chromosome"/>
</dbReference>
<dbReference type="GO" id="GO:0005829">
    <property type="term" value="C:cytosol"/>
    <property type="evidence" value="ECO:0007669"/>
    <property type="project" value="TreeGrafter"/>
</dbReference>
<dbReference type="GO" id="GO:0035870">
    <property type="term" value="F:dITP diphosphatase activity"/>
    <property type="evidence" value="ECO:0007669"/>
    <property type="project" value="RHEA"/>
</dbReference>
<dbReference type="GO" id="GO:0036220">
    <property type="term" value="F:ITP diphosphatase activity"/>
    <property type="evidence" value="ECO:0007669"/>
    <property type="project" value="UniProtKB-EC"/>
</dbReference>
<dbReference type="GO" id="GO:0046872">
    <property type="term" value="F:metal ion binding"/>
    <property type="evidence" value="ECO:0007669"/>
    <property type="project" value="UniProtKB-KW"/>
</dbReference>
<dbReference type="GO" id="GO:0000166">
    <property type="term" value="F:nucleotide binding"/>
    <property type="evidence" value="ECO:0007669"/>
    <property type="project" value="UniProtKB-KW"/>
</dbReference>
<dbReference type="GO" id="GO:0017111">
    <property type="term" value="F:ribonucleoside triphosphate phosphatase activity"/>
    <property type="evidence" value="ECO:0007669"/>
    <property type="project" value="InterPro"/>
</dbReference>
<dbReference type="GO" id="GO:0036222">
    <property type="term" value="F:XTP diphosphatase activity"/>
    <property type="evidence" value="ECO:0007669"/>
    <property type="project" value="RHEA"/>
</dbReference>
<dbReference type="GO" id="GO:0009117">
    <property type="term" value="P:nucleotide metabolic process"/>
    <property type="evidence" value="ECO:0007669"/>
    <property type="project" value="UniProtKB-KW"/>
</dbReference>
<dbReference type="GO" id="GO:0009146">
    <property type="term" value="P:purine nucleoside triphosphate catabolic process"/>
    <property type="evidence" value="ECO:0007669"/>
    <property type="project" value="UniProtKB-UniRule"/>
</dbReference>
<dbReference type="CDD" id="cd00515">
    <property type="entry name" value="HAM1"/>
    <property type="match status" value="1"/>
</dbReference>
<dbReference type="FunFam" id="3.90.950.10:FF:000001">
    <property type="entry name" value="dITP/XTP pyrophosphatase"/>
    <property type="match status" value="1"/>
</dbReference>
<dbReference type="Gene3D" id="3.90.950.10">
    <property type="match status" value="1"/>
</dbReference>
<dbReference type="HAMAP" id="MF_01405">
    <property type="entry name" value="Non_canon_purine_NTPase"/>
    <property type="match status" value="1"/>
</dbReference>
<dbReference type="InterPro" id="IPR020922">
    <property type="entry name" value="dITP/XTP_pyrophosphatase"/>
</dbReference>
<dbReference type="InterPro" id="IPR029001">
    <property type="entry name" value="ITPase-like_fam"/>
</dbReference>
<dbReference type="InterPro" id="IPR002637">
    <property type="entry name" value="RdgB/HAM1"/>
</dbReference>
<dbReference type="NCBIfam" id="TIGR00042">
    <property type="entry name" value="RdgB/HAM1 family non-canonical purine NTP pyrophosphatase"/>
    <property type="match status" value="1"/>
</dbReference>
<dbReference type="PANTHER" id="PTHR11067:SF9">
    <property type="entry name" value="INOSINE TRIPHOSPHATE PYROPHOSPHATASE"/>
    <property type="match status" value="1"/>
</dbReference>
<dbReference type="PANTHER" id="PTHR11067">
    <property type="entry name" value="INOSINE TRIPHOSPHATE PYROPHOSPHATASE/HAM1 PROTEIN"/>
    <property type="match status" value="1"/>
</dbReference>
<dbReference type="Pfam" id="PF01725">
    <property type="entry name" value="Ham1p_like"/>
    <property type="match status" value="1"/>
</dbReference>
<dbReference type="SUPFAM" id="SSF52972">
    <property type="entry name" value="ITPase-like"/>
    <property type="match status" value="1"/>
</dbReference>
<organism>
    <name type="scientific">Xanthomonas oryzae pv. oryzae (strain KACC10331 / KXO85)</name>
    <dbReference type="NCBI Taxonomy" id="291331"/>
    <lineage>
        <taxon>Bacteria</taxon>
        <taxon>Pseudomonadati</taxon>
        <taxon>Pseudomonadota</taxon>
        <taxon>Gammaproteobacteria</taxon>
        <taxon>Lysobacterales</taxon>
        <taxon>Lysobacteraceae</taxon>
        <taxon>Xanthomonas</taxon>
    </lineage>
</organism>
<keyword id="KW-0378">Hydrolase</keyword>
<keyword id="KW-0460">Magnesium</keyword>
<keyword id="KW-0479">Metal-binding</keyword>
<keyword id="KW-0546">Nucleotide metabolism</keyword>
<keyword id="KW-0547">Nucleotide-binding</keyword>
<keyword id="KW-1185">Reference proteome</keyword>
<accession>Q5H3S6</accession>
<reference key="1">
    <citation type="journal article" date="2005" name="Nucleic Acids Res.">
        <title>The genome sequence of Xanthomonas oryzae pathovar oryzae KACC10331, the bacterial blight pathogen of rice.</title>
        <authorList>
            <person name="Lee B.-M."/>
            <person name="Park Y.-J."/>
            <person name="Park D.-S."/>
            <person name="Kang H.-W."/>
            <person name="Kim J.-G."/>
            <person name="Song E.-S."/>
            <person name="Park I.-C."/>
            <person name="Yoon U.-H."/>
            <person name="Hahn J.-H."/>
            <person name="Koo B.-S."/>
            <person name="Lee G.-B."/>
            <person name="Kim H."/>
            <person name="Park H.-S."/>
            <person name="Yoon K.-O."/>
            <person name="Kim J.-H."/>
            <person name="Jung C.-H."/>
            <person name="Koh N.-H."/>
            <person name="Seo J.-S."/>
            <person name="Go S.-J."/>
        </authorList>
    </citation>
    <scope>NUCLEOTIDE SEQUENCE [LARGE SCALE GENOMIC DNA]</scope>
    <source>
        <strain>KACC10331 / KXO85</strain>
    </source>
</reference>